<proteinExistence type="inferred from homology"/>
<comment type="function">
    <text evidence="1">Cleaves peptides in various proteins in a process that requires ATP hydrolysis. Has a chymotrypsin-like activity. Plays a major role in the degradation of misfolded proteins.</text>
</comment>
<comment type="catalytic activity">
    <reaction evidence="1">
        <text>Hydrolysis of proteins to small peptides in the presence of ATP and magnesium. alpha-casein is the usual test substrate. In the absence of ATP, only oligopeptides shorter than five residues are hydrolyzed (such as succinyl-Leu-Tyr-|-NHMec, and Leu-Tyr-Leu-|-Tyr-Trp, in which cleavage of the -Tyr-|-Leu- and -Tyr-|-Trp bonds also occurs).</text>
        <dbReference type="EC" id="3.4.21.92"/>
    </reaction>
</comment>
<comment type="subunit">
    <text evidence="1">Fourteen ClpP subunits assemble into 2 heptameric rings which stack back to back to give a disk-like structure with a central cavity, resembling the structure of eukaryotic proteasomes.</text>
</comment>
<comment type="subcellular location">
    <subcellularLocation>
        <location evidence="1">Cytoplasm</location>
    </subcellularLocation>
</comment>
<comment type="similarity">
    <text evidence="1">Belongs to the peptidase S14 family.</text>
</comment>
<organism>
    <name type="scientific">Methylococcus capsulatus (strain ATCC 33009 / NCIMB 11132 / Bath)</name>
    <dbReference type="NCBI Taxonomy" id="243233"/>
    <lineage>
        <taxon>Bacteria</taxon>
        <taxon>Pseudomonadati</taxon>
        <taxon>Pseudomonadota</taxon>
        <taxon>Gammaproteobacteria</taxon>
        <taxon>Methylococcales</taxon>
        <taxon>Methylococcaceae</taxon>
        <taxon>Methylococcus</taxon>
    </lineage>
</organism>
<keyword id="KW-0963">Cytoplasm</keyword>
<keyword id="KW-0378">Hydrolase</keyword>
<keyword id="KW-0645">Protease</keyword>
<keyword id="KW-1185">Reference proteome</keyword>
<keyword id="KW-0720">Serine protease</keyword>
<evidence type="ECO:0000255" key="1">
    <source>
        <dbReference type="HAMAP-Rule" id="MF_00444"/>
    </source>
</evidence>
<reference key="1">
    <citation type="journal article" date="2004" name="PLoS Biol.">
        <title>Genomic insights into methanotrophy: the complete genome sequence of Methylococcus capsulatus (Bath).</title>
        <authorList>
            <person name="Ward N.L."/>
            <person name="Larsen O."/>
            <person name="Sakwa J."/>
            <person name="Bruseth L."/>
            <person name="Khouri H.M."/>
            <person name="Durkin A.S."/>
            <person name="Dimitrov G."/>
            <person name="Jiang L."/>
            <person name="Scanlan D."/>
            <person name="Kang K.H."/>
            <person name="Lewis M.R."/>
            <person name="Nelson K.E."/>
            <person name="Methe B.A."/>
            <person name="Wu M."/>
            <person name="Heidelberg J.F."/>
            <person name="Paulsen I.T."/>
            <person name="Fouts D.E."/>
            <person name="Ravel J."/>
            <person name="Tettelin H."/>
            <person name="Ren Q."/>
            <person name="Read T.D."/>
            <person name="DeBoy R.T."/>
            <person name="Seshadri R."/>
            <person name="Salzberg S.L."/>
            <person name="Jensen H.B."/>
            <person name="Birkeland N.K."/>
            <person name="Nelson W.C."/>
            <person name="Dodson R.J."/>
            <person name="Grindhaug S.H."/>
            <person name="Holt I.E."/>
            <person name="Eidhammer I."/>
            <person name="Jonasen I."/>
            <person name="Vanaken S."/>
            <person name="Utterback T.R."/>
            <person name="Feldblyum T.V."/>
            <person name="Fraser C.M."/>
            <person name="Lillehaug J.R."/>
            <person name="Eisen J.A."/>
        </authorList>
    </citation>
    <scope>NUCLEOTIDE SEQUENCE [LARGE SCALE GENOMIC DNA]</scope>
    <source>
        <strain>ATCC 33009 / NCIMB 11132 / Bath</strain>
    </source>
</reference>
<feature type="chain" id="PRO_0000179588" description="ATP-dependent Clp protease proteolytic subunit 1">
    <location>
        <begin position="1"/>
        <end position="206"/>
    </location>
</feature>
<feature type="active site" description="Nucleophile" evidence="1">
    <location>
        <position position="106"/>
    </location>
</feature>
<feature type="active site" evidence="1">
    <location>
        <position position="131"/>
    </location>
</feature>
<protein>
    <recommendedName>
        <fullName evidence="1">ATP-dependent Clp protease proteolytic subunit 1</fullName>
        <ecNumber evidence="1">3.4.21.92</ecNumber>
    </recommendedName>
    <alternativeName>
        <fullName evidence="1">Endopeptidase Clp 1</fullName>
    </alternativeName>
</protein>
<accession>Q60C68</accession>
<gene>
    <name evidence="1" type="primary">clpP1</name>
    <name type="ordered locus">MCA0242</name>
</gene>
<sequence length="206" mass="22333">MDYATRAAGGLVPVVIEQSARGERAFDIYSRLLKERVIFLVGQVEDYMANLVIAQLLFLESENPDKDIHLYINSPGGLVTAGLAIYDTMQFIKPDVSTLCVGQAASMGALLLAGGAAGKRYCLPHSRIMIHQPLGGFQGQASDIDIHAREILAVRDRLNKILAHHTGQPIEKIQIDTDRDNFMGGNDAVEYGLIDKVLVSRASGAA</sequence>
<name>CLPP1_METCA</name>
<dbReference type="EC" id="3.4.21.92" evidence="1"/>
<dbReference type="EMBL" id="AE017282">
    <property type="protein sequence ID" value="AAU90605.1"/>
    <property type="molecule type" value="Genomic_DNA"/>
</dbReference>
<dbReference type="RefSeq" id="WP_010959607.1">
    <property type="nucleotide sequence ID" value="NC_002977.6"/>
</dbReference>
<dbReference type="SMR" id="Q60C68"/>
<dbReference type="STRING" id="243233.MCA0242"/>
<dbReference type="MEROPS" id="S14.001"/>
<dbReference type="GeneID" id="88222587"/>
<dbReference type="KEGG" id="mca:MCA0242"/>
<dbReference type="eggNOG" id="COG0740">
    <property type="taxonomic scope" value="Bacteria"/>
</dbReference>
<dbReference type="HOGENOM" id="CLU_058707_3_2_6"/>
<dbReference type="Proteomes" id="UP000006821">
    <property type="component" value="Chromosome"/>
</dbReference>
<dbReference type="GO" id="GO:0005737">
    <property type="term" value="C:cytoplasm"/>
    <property type="evidence" value="ECO:0007669"/>
    <property type="project" value="UniProtKB-SubCell"/>
</dbReference>
<dbReference type="GO" id="GO:0009368">
    <property type="term" value="C:endopeptidase Clp complex"/>
    <property type="evidence" value="ECO:0007669"/>
    <property type="project" value="TreeGrafter"/>
</dbReference>
<dbReference type="GO" id="GO:0004176">
    <property type="term" value="F:ATP-dependent peptidase activity"/>
    <property type="evidence" value="ECO:0007669"/>
    <property type="project" value="InterPro"/>
</dbReference>
<dbReference type="GO" id="GO:0051117">
    <property type="term" value="F:ATPase binding"/>
    <property type="evidence" value="ECO:0007669"/>
    <property type="project" value="TreeGrafter"/>
</dbReference>
<dbReference type="GO" id="GO:0004252">
    <property type="term" value="F:serine-type endopeptidase activity"/>
    <property type="evidence" value="ECO:0007669"/>
    <property type="project" value="UniProtKB-UniRule"/>
</dbReference>
<dbReference type="GO" id="GO:0006515">
    <property type="term" value="P:protein quality control for misfolded or incompletely synthesized proteins"/>
    <property type="evidence" value="ECO:0007669"/>
    <property type="project" value="TreeGrafter"/>
</dbReference>
<dbReference type="CDD" id="cd07017">
    <property type="entry name" value="S14_ClpP_2"/>
    <property type="match status" value="1"/>
</dbReference>
<dbReference type="FunFam" id="3.90.226.10:FF:000001">
    <property type="entry name" value="ATP-dependent Clp protease proteolytic subunit"/>
    <property type="match status" value="1"/>
</dbReference>
<dbReference type="Gene3D" id="3.90.226.10">
    <property type="entry name" value="2-enoyl-CoA Hydratase, Chain A, domain 1"/>
    <property type="match status" value="1"/>
</dbReference>
<dbReference type="HAMAP" id="MF_00444">
    <property type="entry name" value="ClpP"/>
    <property type="match status" value="1"/>
</dbReference>
<dbReference type="InterPro" id="IPR001907">
    <property type="entry name" value="ClpP"/>
</dbReference>
<dbReference type="InterPro" id="IPR029045">
    <property type="entry name" value="ClpP/crotonase-like_dom_sf"/>
</dbReference>
<dbReference type="InterPro" id="IPR023562">
    <property type="entry name" value="ClpP/TepA"/>
</dbReference>
<dbReference type="InterPro" id="IPR033135">
    <property type="entry name" value="ClpP_His_AS"/>
</dbReference>
<dbReference type="InterPro" id="IPR018215">
    <property type="entry name" value="ClpP_Ser_AS"/>
</dbReference>
<dbReference type="NCBIfam" id="TIGR00493">
    <property type="entry name" value="clpP"/>
    <property type="match status" value="1"/>
</dbReference>
<dbReference type="NCBIfam" id="NF001368">
    <property type="entry name" value="PRK00277.1"/>
    <property type="match status" value="1"/>
</dbReference>
<dbReference type="NCBIfam" id="NF009205">
    <property type="entry name" value="PRK12553.1"/>
    <property type="match status" value="1"/>
</dbReference>
<dbReference type="PANTHER" id="PTHR10381">
    <property type="entry name" value="ATP-DEPENDENT CLP PROTEASE PROTEOLYTIC SUBUNIT"/>
    <property type="match status" value="1"/>
</dbReference>
<dbReference type="PANTHER" id="PTHR10381:SF70">
    <property type="entry name" value="ATP-DEPENDENT CLP PROTEASE PROTEOLYTIC SUBUNIT"/>
    <property type="match status" value="1"/>
</dbReference>
<dbReference type="Pfam" id="PF00574">
    <property type="entry name" value="CLP_protease"/>
    <property type="match status" value="1"/>
</dbReference>
<dbReference type="PRINTS" id="PR00127">
    <property type="entry name" value="CLPPROTEASEP"/>
</dbReference>
<dbReference type="SUPFAM" id="SSF52096">
    <property type="entry name" value="ClpP/crotonase"/>
    <property type="match status" value="1"/>
</dbReference>
<dbReference type="PROSITE" id="PS00382">
    <property type="entry name" value="CLP_PROTEASE_HIS"/>
    <property type="match status" value="1"/>
</dbReference>
<dbReference type="PROSITE" id="PS00381">
    <property type="entry name" value="CLP_PROTEASE_SER"/>
    <property type="match status" value="1"/>
</dbReference>